<keyword id="KW-0028">Amino-acid biosynthesis</keyword>
<keyword id="KW-0963">Cytoplasm</keyword>
<keyword id="KW-0220">Diaminopimelate biosynthesis</keyword>
<keyword id="KW-0457">Lysine biosynthesis</keyword>
<keyword id="KW-0520">NAD</keyword>
<keyword id="KW-0521">NADP</keyword>
<keyword id="KW-0560">Oxidoreductase</keyword>
<keyword id="KW-1185">Reference proteome</keyword>
<dbReference type="EC" id="1.17.1.8" evidence="1"/>
<dbReference type="EMBL" id="CP000725">
    <property type="protein sequence ID" value="ABV10837.1"/>
    <property type="molecule type" value="Genomic_DNA"/>
</dbReference>
<dbReference type="RefSeq" id="WP_012000527.1">
    <property type="nucleotide sequence ID" value="NC_009785.1"/>
</dbReference>
<dbReference type="SMR" id="A8AX95"/>
<dbReference type="STRING" id="467705.SGO_1116"/>
<dbReference type="KEGG" id="sgo:SGO_1116"/>
<dbReference type="eggNOG" id="COG0289">
    <property type="taxonomic scope" value="Bacteria"/>
</dbReference>
<dbReference type="HOGENOM" id="CLU_047479_0_1_9"/>
<dbReference type="UniPathway" id="UPA00034">
    <property type="reaction ID" value="UER00018"/>
</dbReference>
<dbReference type="Proteomes" id="UP000001131">
    <property type="component" value="Chromosome"/>
</dbReference>
<dbReference type="GO" id="GO:0005829">
    <property type="term" value="C:cytosol"/>
    <property type="evidence" value="ECO:0007669"/>
    <property type="project" value="TreeGrafter"/>
</dbReference>
<dbReference type="GO" id="GO:0008839">
    <property type="term" value="F:4-hydroxy-tetrahydrodipicolinate reductase"/>
    <property type="evidence" value="ECO:0007669"/>
    <property type="project" value="UniProtKB-EC"/>
</dbReference>
<dbReference type="GO" id="GO:0051287">
    <property type="term" value="F:NAD binding"/>
    <property type="evidence" value="ECO:0007669"/>
    <property type="project" value="UniProtKB-UniRule"/>
</dbReference>
<dbReference type="GO" id="GO:0050661">
    <property type="term" value="F:NADP binding"/>
    <property type="evidence" value="ECO:0007669"/>
    <property type="project" value="UniProtKB-UniRule"/>
</dbReference>
<dbReference type="GO" id="GO:0016726">
    <property type="term" value="F:oxidoreductase activity, acting on CH or CH2 groups, NAD or NADP as acceptor"/>
    <property type="evidence" value="ECO:0007669"/>
    <property type="project" value="UniProtKB-UniRule"/>
</dbReference>
<dbReference type="GO" id="GO:0019877">
    <property type="term" value="P:diaminopimelate biosynthetic process"/>
    <property type="evidence" value="ECO:0007669"/>
    <property type="project" value="UniProtKB-UniRule"/>
</dbReference>
<dbReference type="GO" id="GO:0009089">
    <property type="term" value="P:lysine biosynthetic process via diaminopimelate"/>
    <property type="evidence" value="ECO:0007669"/>
    <property type="project" value="UniProtKB-UniRule"/>
</dbReference>
<dbReference type="CDD" id="cd02274">
    <property type="entry name" value="DHDPR_N"/>
    <property type="match status" value="1"/>
</dbReference>
<dbReference type="FunFam" id="3.30.360.10:FF:000009">
    <property type="entry name" value="4-hydroxy-tetrahydrodipicolinate reductase"/>
    <property type="match status" value="1"/>
</dbReference>
<dbReference type="Gene3D" id="3.30.360.10">
    <property type="entry name" value="Dihydrodipicolinate Reductase, domain 2"/>
    <property type="match status" value="1"/>
</dbReference>
<dbReference type="Gene3D" id="3.40.50.720">
    <property type="entry name" value="NAD(P)-binding Rossmann-like Domain"/>
    <property type="match status" value="1"/>
</dbReference>
<dbReference type="HAMAP" id="MF_00102">
    <property type="entry name" value="DapB"/>
    <property type="match status" value="1"/>
</dbReference>
<dbReference type="InterPro" id="IPR022663">
    <property type="entry name" value="DapB_C"/>
</dbReference>
<dbReference type="InterPro" id="IPR000846">
    <property type="entry name" value="DapB_N"/>
</dbReference>
<dbReference type="InterPro" id="IPR022664">
    <property type="entry name" value="DapB_N_CS"/>
</dbReference>
<dbReference type="InterPro" id="IPR023940">
    <property type="entry name" value="DHDPR_bac"/>
</dbReference>
<dbReference type="InterPro" id="IPR036291">
    <property type="entry name" value="NAD(P)-bd_dom_sf"/>
</dbReference>
<dbReference type="NCBIfam" id="TIGR00036">
    <property type="entry name" value="dapB"/>
    <property type="match status" value="1"/>
</dbReference>
<dbReference type="PANTHER" id="PTHR20836:SF0">
    <property type="entry name" value="4-HYDROXY-TETRAHYDRODIPICOLINATE REDUCTASE 1, CHLOROPLASTIC-RELATED"/>
    <property type="match status" value="1"/>
</dbReference>
<dbReference type="PANTHER" id="PTHR20836">
    <property type="entry name" value="DIHYDRODIPICOLINATE REDUCTASE"/>
    <property type="match status" value="1"/>
</dbReference>
<dbReference type="Pfam" id="PF05173">
    <property type="entry name" value="DapB_C"/>
    <property type="match status" value="1"/>
</dbReference>
<dbReference type="Pfam" id="PF01113">
    <property type="entry name" value="DapB_N"/>
    <property type="match status" value="1"/>
</dbReference>
<dbReference type="PIRSF" id="PIRSF000161">
    <property type="entry name" value="DHPR"/>
    <property type="match status" value="1"/>
</dbReference>
<dbReference type="SUPFAM" id="SSF55347">
    <property type="entry name" value="Glyceraldehyde-3-phosphate dehydrogenase-like, C-terminal domain"/>
    <property type="match status" value="1"/>
</dbReference>
<dbReference type="SUPFAM" id="SSF51735">
    <property type="entry name" value="NAD(P)-binding Rossmann-fold domains"/>
    <property type="match status" value="1"/>
</dbReference>
<dbReference type="PROSITE" id="PS01298">
    <property type="entry name" value="DAPB"/>
    <property type="match status" value="1"/>
</dbReference>
<reference key="1">
    <citation type="journal article" date="2007" name="J. Bacteriol.">
        <title>Genome-wide transcriptional changes in Streptococcus gordonii in response to competence signaling peptide.</title>
        <authorList>
            <person name="Vickerman M.M."/>
            <person name="Iobst S."/>
            <person name="Jesionowski A.M."/>
            <person name="Gill S.R."/>
        </authorList>
    </citation>
    <scope>NUCLEOTIDE SEQUENCE [LARGE SCALE GENOMIC DNA]</scope>
    <source>
        <strain>Challis / ATCC 35105 / BCRC 15272 / CH1 / DL1 / V288</strain>
    </source>
</reference>
<gene>
    <name evidence="1" type="primary">dapB</name>
    <name type="ordered locus">SGO_1116</name>
</gene>
<organism>
    <name type="scientific">Streptococcus gordonii (strain Challis / ATCC 35105 / BCRC 15272 / CH1 / DL1 / V288)</name>
    <dbReference type="NCBI Taxonomy" id="467705"/>
    <lineage>
        <taxon>Bacteria</taxon>
        <taxon>Bacillati</taxon>
        <taxon>Bacillota</taxon>
        <taxon>Bacilli</taxon>
        <taxon>Lactobacillales</taxon>
        <taxon>Streptococcaceae</taxon>
        <taxon>Streptococcus</taxon>
    </lineage>
</organism>
<sequence length="255" mass="27799">MGIKIIIAGFKGKMGQAAYKMVTEDPELELVGLLDPFTDEKEVAGVPVFNAKEELAGLEAHVWVDFTTPKVAYDNTRFALEQGFCPVVGTTGFTPEQLEELITLSREKQLGGLIAPNFALGAVLLMQFAAQAAKYFPNVEIIELHHDQKKDAPSGTAIKTAELISQVRPSKQQGAADEEESIAGARGAYFDGMRIHSVRLPGLVAHQEVIFGSQGEGLTLRHDSYDRASFMTGVNLAIKEVVKRSELVYGLEHLL</sequence>
<name>DAPB_STRGC</name>
<feature type="chain" id="PRO_1000075690" description="4-hydroxy-tetrahydrodipicolinate reductase">
    <location>
        <begin position="1"/>
        <end position="255"/>
    </location>
</feature>
<feature type="active site" description="Proton donor/acceptor" evidence="1">
    <location>
        <position position="145"/>
    </location>
</feature>
<feature type="active site" description="Proton donor" evidence="1">
    <location>
        <position position="149"/>
    </location>
</feature>
<feature type="binding site" evidence="1">
    <location>
        <begin position="9"/>
        <end position="14"/>
    </location>
    <ligand>
        <name>NAD(+)</name>
        <dbReference type="ChEBI" id="CHEBI:57540"/>
    </ligand>
</feature>
<feature type="binding site" evidence="1">
    <location>
        <begin position="89"/>
        <end position="91"/>
    </location>
    <ligand>
        <name>NAD(+)</name>
        <dbReference type="ChEBI" id="CHEBI:57540"/>
    </ligand>
</feature>
<feature type="binding site" evidence="1">
    <location>
        <begin position="115"/>
        <end position="118"/>
    </location>
    <ligand>
        <name>NAD(+)</name>
        <dbReference type="ChEBI" id="CHEBI:57540"/>
    </ligand>
</feature>
<feature type="binding site" evidence="1">
    <location>
        <position position="146"/>
    </location>
    <ligand>
        <name>(S)-2,3,4,5-tetrahydrodipicolinate</name>
        <dbReference type="ChEBI" id="CHEBI:16845"/>
    </ligand>
</feature>
<feature type="binding site" evidence="1">
    <location>
        <begin position="155"/>
        <end position="156"/>
    </location>
    <ligand>
        <name>(S)-2,3,4,5-tetrahydrodipicolinate</name>
        <dbReference type="ChEBI" id="CHEBI:16845"/>
    </ligand>
</feature>
<comment type="function">
    <text evidence="1">Catalyzes the conversion of 4-hydroxy-tetrahydrodipicolinate (HTPA) to tetrahydrodipicolinate.</text>
</comment>
<comment type="catalytic activity">
    <reaction evidence="1">
        <text>(S)-2,3,4,5-tetrahydrodipicolinate + NAD(+) + H2O = (2S,4S)-4-hydroxy-2,3,4,5-tetrahydrodipicolinate + NADH + H(+)</text>
        <dbReference type="Rhea" id="RHEA:35323"/>
        <dbReference type="ChEBI" id="CHEBI:15377"/>
        <dbReference type="ChEBI" id="CHEBI:15378"/>
        <dbReference type="ChEBI" id="CHEBI:16845"/>
        <dbReference type="ChEBI" id="CHEBI:57540"/>
        <dbReference type="ChEBI" id="CHEBI:57945"/>
        <dbReference type="ChEBI" id="CHEBI:67139"/>
        <dbReference type="EC" id="1.17.1.8"/>
    </reaction>
</comment>
<comment type="catalytic activity">
    <reaction evidence="1">
        <text>(S)-2,3,4,5-tetrahydrodipicolinate + NADP(+) + H2O = (2S,4S)-4-hydroxy-2,3,4,5-tetrahydrodipicolinate + NADPH + H(+)</text>
        <dbReference type="Rhea" id="RHEA:35331"/>
        <dbReference type="ChEBI" id="CHEBI:15377"/>
        <dbReference type="ChEBI" id="CHEBI:15378"/>
        <dbReference type="ChEBI" id="CHEBI:16845"/>
        <dbReference type="ChEBI" id="CHEBI:57783"/>
        <dbReference type="ChEBI" id="CHEBI:58349"/>
        <dbReference type="ChEBI" id="CHEBI:67139"/>
        <dbReference type="EC" id="1.17.1.8"/>
    </reaction>
</comment>
<comment type="pathway">
    <text evidence="1">Amino-acid biosynthesis; L-lysine biosynthesis via DAP pathway; (S)-tetrahydrodipicolinate from L-aspartate: step 4/4.</text>
</comment>
<comment type="subcellular location">
    <subcellularLocation>
        <location evidence="1">Cytoplasm</location>
    </subcellularLocation>
</comment>
<comment type="similarity">
    <text evidence="1">Belongs to the DapB family.</text>
</comment>
<comment type="caution">
    <text evidence="2">Was originally thought to be a dihydrodipicolinate reductase (DHDPR), catalyzing the conversion of dihydrodipicolinate to tetrahydrodipicolinate. However, it was shown in E.coli that the substrate of the enzymatic reaction is not dihydrodipicolinate (DHDP) but in fact (2S,4S)-4-hydroxy-2,3,4,5-tetrahydrodipicolinic acid (HTPA), the product released by the DapA-catalyzed reaction.</text>
</comment>
<protein>
    <recommendedName>
        <fullName evidence="1">4-hydroxy-tetrahydrodipicolinate reductase</fullName>
        <shortName evidence="1">HTPA reductase</shortName>
        <ecNumber evidence="1">1.17.1.8</ecNumber>
    </recommendedName>
</protein>
<proteinExistence type="inferred from homology"/>
<accession>A8AX95</accession>
<evidence type="ECO:0000255" key="1">
    <source>
        <dbReference type="HAMAP-Rule" id="MF_00102"/>
    </source>
</evidence>
<evidence type="ECO:0000305" key="2"/>